<organism>
    <name type="scientific">Aspergillus oryzae (strain ATCC 42149 / RIB 40)</name>
    <name type="common">Yellow koji mold</name>
    <dbReference type="NCBI Taxonomy" id="510516"/>
    <lineage>
        <taxon>Eukaryota</taxon>
        <taxon>Fungi</taxon>
        <taxon>Dikarya</taxon>
        <taxon>Ascomycota</taxon>
        <taxon>Pezizomycotina</taxon>
        <taxon>Eurotiomycetes</taxon>
        <taxon>Eurotiomycetidae</taxon>
        <taxon>Eurotiales</taxon>
        <taxon>Aspergillaceae</taxon>
        <taxon>Aspergillus</taxon>
        <taxon>Aspergillus subgen. Circumdati</taxon>
    </lineage>
</organism>
<accession>Q2UGQ8</accession>
<proteinExistence type="inferred from homology"/>
<keyword id="KW-0175">Coiled coil</keyword>
<keyword id="KW-0539">Nucleus</keyword>
<keyword id="KW-1185">Reference proteome</keyword>
<keyword id="KW-0690">Ribosome biogenesis</keyword>
<keyword id="KW-0698">rRNA processing</keyword>
<dbReference type="EMBL" id="BA000051">
    <property type="protein sequence ID" value="BAE59257.1"/>
    <property type="molecule type" value="Genomic_DNA"/>
</dbReference>
<dbReference type="RefSeq" id="XP_001821259.1">
    <property type="nucleotide sequence ID" value="XM_001821207.2"/>
</dbReference>
<dbReference type="SMR" id="Q2UGQ8"/>
<dbReference type="STRING" id="510516.Q2UGQ8"/>
<dbReference type="EnsemblFungi" id="BAE59257">
    <property type="protein sequence ID" value="BAE59257"/>
    <property type="gene ID" value="AO090023000752"/>
</dbReference>
<dbReference type="GeneID" id="5993261"/>
<dbReference type="KEGG" id="aor:AO090023000752"/>
<dbReference type="VEuPathDB" id="FungiDB:AO090023000752"/>
<dbReference type="HOGENOM" id="CLU_019619_1_1_1"/>
<dbReference type="OMA" id="QKVTWIV"/>
<dbReference type="OrthoDB" id="122040at5052"/>
<dbReference type="Proteomes" id="UP000006564">
    <property type="component" value="Chromosome 3"/>
</dbReference>
<dbReference type="GO" id="GO:0005654">
    <property type="term" value="C:nucleoplasm"/>
    <property type="evidence" value="ECO:0007669"/>
    <property type="project" value="UniProtKB-SubCell"/>
</dbReference>
<dbReference type="GO" id="GO:0070545">
    <property type="term" value="C:PeBoW complex"/>
    <property type="evidence" value="ECO:0007669"/>
    <property type="project" value="TreeGrafter"/>
</dbReference>
<dbReference type="GO" id="GO:0030687">
    <property type="term" value="C:preribosome, large subunit precursor"/>
    <property type="evidence" value="ECO:0007669"/>
    <property type="project" value="UniProtKB-UniRule"/>
</dbReference>
<dbReference type="GO" id="GO:0043021">
    <property type="term" value="F:ribonucleoprotein complex binding"/>
    <property type="evidence" value="ECO:0007669"/>
    <property type="project" value="UniProtKB-UniRule"/>
</dbReference>
<dbReference type="GO" id="GO:0003723">
    <property type="term" value="F:RNA binding"/>
    <property type="evidence" value="ECO:0007669"/>
    <property type="project" value="TreeGrafter"/>
</dbReference>
<dbReference type="GO" id="GO:0000466">
    <property type="term" value="P:maturation of 5.8S rRNA from tricistronic rRNA transcript (SSU-rRNA, 5.8S rRNA, LSU-rRNA)"/>
    <property type="evidence" value="ECO:0007669"/>
    <property type="project" value="UniProtKB-UniRule"/>
</dbReference>
<dbReference type="GO" id="GO:0000463">
    <property type="term" value="P:maturation of LSU-rRNA from tricistronic rRNA transcript (SSU-rRNA, 5.8S rRNA, LSU-rRNA)"/>
    <property type="evidence" value="ECO:0007669"/>
    <property type="project" value="UniProtKB-UniRule"/>
</dbReference>
<dbReference type="CDD" id="cd17709">
    <property type="entry name" value="BRCT_pescadillo_like"/>
    <property type="match status" value="1"/>
</dbReference>
<dbReference type="FunFam" id="3.40.50.10190:FF:000056">
    <property type="entry name" value="Pescadillo homolog"/>
    <property type="match status" value="1"/>
</dbReference>
<dbReference type="Gene3D" id="3.40.50.10190">
    <property type="entry name" value="BRCT domain"/>
    <property type="match status" value="1"/>
</dbReference>
<dbReference type="HAMAP" id="MF_03028">
    <property type="entry name" value="Pescadillo"/>
    <property type="match status" value="1"/>
</dbReference>
<dbReference type="InterPro" id="IPR001357">
    <property type="entry name" value="BRCT_dom"/>
</dbReference>
<dbReference type="InterPro" id="IPR036420">
    <property type="entry name" value="BRCT_dom_sf"/>
</dbReference>
<dbReference type="InterPro" id="IPR010613">
    <property type="entry name" value="PES"/>
</dbReference>
<dbReference type="PANTHER" id="PTHR12221">
    <property type="entry name" value="PESCADILLO - RELATED"/>
    <property type="match status" value="1"/>
</dbReference>
<dbReference type="PANTHER" id="PTHR12221:SF6">
    <property type="entry name" value="PESCADILLO HOMOLOG"/>
    <property type="match status" value="1"/>
</dbReference>
<dbReference type="Pfam" id="PF06732">
    <property type="entry name" value="Pescadillo_N"/>
    <property type="match status" value="1"/>
</dbReference>
<dbReference type="SUPFAM" id="SSF52113">
    <property type="entry name" value="BRCT domain"/>
    <property type="match status" value="1"/>
</dbReference>
<dbReference type="PROSITE" id="PS50172">
    <property type="entry name" value="BRCT"/>
    <property type="match status" value="1"/>
</dbReference>
<gene>
    <name type="primary">nop7</name>
    <name type="ORF">AO090023000752</name>
</gene>
<protein>
    <recommendedName>
        <fullName evidence="1">Pescadillo homolog</fullName>
    </recommendedName>
    <alternativeName>
        <fullName evidence="1">Nucleolar protein 7 homolog</fullName>
    </alternativeName>
</protein>
<evidence type="ECO:0000255" key="1">
    <source>
        <dbReference type="HAMAP-Rule" id="MF_03028"/>
    </source>
</evidence>
<evidence type="ECO:0000256" key="2">
    <source>
        <dbReference type="SAM" id="MobiDB-lite"/>
    </source>
</evidence>
<comment type="function">
    <text evidence="1">Component of the NOP7 complex, which is required for maturation of the 25S and 5.8S ribosomal RNAs and formation of the 60S ribosome.</text>
</comment>
<comment type="subunit">
    <text evidence="1">Component of the NOP7 complex, composed of erb1, nop7 and ytm1. The complex is held together by erb1, which interacts with nop7 via its N-terminal domain and with ytm1 via a high-affinity interaction between the seven-bladed beta-propeller domains of the 2 proteins. The NOP7 complex associates with the 66S pre-ribosome.</text>
</comment>
<comment type="subcellular location">
    <subcellularLocation>
        <location evidence="1">Nucleus</location>
        <location evidence="1">Nucleolus</location>
    </subcellularLocation>
    <subcellularLocation>
        <location evidence="1">Nucleus</location>
        <location evidence="1">Nucleoplasm</location>
    </subcellularLocation>
</comment>
<comment type="similarity">
    <text evidence="1">Belongs to the pescadillo family.</text>
</comment>
<feature type="chain" id="PRO_0000370481" description="Pescadillo homolog">
    <location>
        <begin position="1"/>
        <end position="681"/>
    </location>
</feature>
<feature type="domain" description="BRCT" evidence="1">
    <location>
        <begin position="350"/>
        <end position="469"/>
    </location>
</feature>
<feature type="region of interest" description="Disordered" evidence="2">
    <location>
        <begin position="489"/>
        <end position="681"/>
    </location>
</feature>
<feature type="coiled-coil region" evidence="1">
    <location>
        <begin position="491"/>
        <end position="527"/>
    </location>
</feature>
<feature type="coiled-coil region" evidence="1">
    <location>
        <begin position="574"/>
        <end position="681"/>
    </location>
</feature>
<feature type="compositionally biased region" description="Acidic residues" evidence="2">
    <location>
        <begin position="496"/>
        <end position="521"/>
    </location>
</feature>
<feature type="compositionally biased region" description="Basic and acidic residues" evidence="2">
    <location>
        <begin position="522"/>
        <end position="533"/>
    </location>
</feature>
<feature type="compositionally biased region" description="Acidic residues" evidence="2">
    <location>
        <begin position="534"/>
        <end position="546"/>
    </location>
</feature>
<feature type="compositionally biased region" description="Acidic residues" evidence="2">
    <location>
        <begin position="554"/>
        <end position="586"/>
    </location>
</feature>
<feature type="compositionally biased region" description="Basic and acidic residues" evidence="2">
    <location>
        <begin position="587"/>
        <end position="597"/>
    </location>
</feature>
<feature type="compositionally biased region" description="Basic residues" evidence="2">
    <location>
        <begin position="617"/>
        <end position="629"/>
    </location>
</feature>
<feature type="compositionally biased region" description="Basic and acidic residues" evidence="2">
    <location>
        <begin position="630"/>
        <end position="640"/>
    </location>
</feature>
<name>PESC_ASPOR</name>
<sequence>MAKIKKKGTSGQAKNYITRTQAVRKLQISLPDFRRLCIFKGIYPREPRNKKKAAKNSTASTTFYYTKDIQYLLHEPLLRKFRDQKALSKKIARSLGRGEVSDAARLEKNHAPQLTLDHIIKERYPTFIDALRDLDDALSLLFLFANLPSTAHVPPKTIALCQRLCHEFQHYLIVTNSLRKSFLSIKGIYYQATIQGQDIMWLVPYRFVQRVNGDVDYRIMATFVDFYTTLLGFVNFRLYSTLGLRYPPKFDTRSDENGAELAAFTLEGRAVGETTKAIEGTKQTSSTANKEVSQDVQAKVDKVIKSAGLDQTKDDQAVQATEESTEEIDKFEPAAPEADTLLQPDISGDTAGALFAPFTFYISREAPKAPLEFILRSFGCKRIGWDAVLGDGAFTHDETDTRITHQIVDRPALPESSLPAVPAASENGAGAVQKVKPGTRIPGRTYIQPQWIWDCINEGKLLRPDLYAPGATLPPHLSPWVKPTRGAYDPRASLAEQEEEGEAEIAAEEEEEDSDEEMEEATDGKKVDAKAEDSAEEENEDEDDSVDGGMDVAGTDDDEDESEEEMEDEFGGFEEEAASESEDEEESARTQHQKELEAEAAGLPFSSSSAGGDSTKKKSSQAKKVASKKRKEEEELERQKMMMSRKKRKLLEKMMYSNKKQSEEAAKLRSKRRKLEKGAEK</sequence>
<reference key="1">
    <citation type="journal article" date="2005" name="Nature">
        <title>Genome sequencing and analysis of Aspergillus oryzae.</title>
        <authorList>
            <person name="Machida M."/>
            <person name="Asai K."/>
            <person name="Sano M."/>
            <person name="Tanaka T."/>
            <person name="Kumagai T."/>
            <person name="Terai G."/>
            <person name="Kusumoto K."/>
            <person name="Arima T."/>
            <person name="Akita O."/>
            <person name="Kashiwagi Y."/>
            <person name="Abe K."/>
            <person name="Gomi K."/>
            <person name="Horiuchi H."/>
            <person name="Kitamoto K."/>
            <person name="Kobayashi T."/>
            <person name="Takeuchi M."/>
            <person name="Denning D.W."/>
            <person name="Galagan J.E."/>
            <person name="Nierman W.C."/>
            <person name="Yu J."/>
            <person name="Archer D.B."/>
            <person name="Bennett J.W."/>
            <person name="Bhatnagar D."/>
            <person name="Cleveland T.E."/>
            <person name="Fedorova N.D."/>
            <person name="Gotoh O."/>
            <person name="Horikawa H."/>
            <person name="Hosoyama A."/>
            <person name="Ichinomiya M."/>
            <person name="Igarashi R."/>
            <person name="Iwashita K."/>
            <person name="Juvvadi P.R."/>
            <person name="Kato M."/>
            <person name="Kato Y."/>
            <person name="Kin T."/>
            <person name="Kokubun A."/>
            <person name="Maeda H."/>
            <person name="Maeyama N."/>
            <person name="Maruyama J."/>
            <person name="Nagasaki H."/>
            <person name="Nakajima T."/>
            <person name="Oda K."/>
            <person name="Okada K."/>
            <person name="Paulsen I."/>
            <person name="Sakamoto K."/>
            <person name="Sawano T."/>
            <person name="Takahashi M."/>
            <person name="Takase K."/>
            <person name="Terabayashi Y."/>
            <person name="Wortman J.R."/>
            <person name="Yamada O."/>
            <person name="Yamagata Y."/>
            <person name="Anazawa H."/>
            <person name="Hata Y."/>
            <person name="Koide Y."/>
            <person name="Komori T."/>
            <person name="Koyama Y."/>
            <person name="Minetoki T."/>
            <person name="Suharnan S."/>
            <person name="Tanaka A."/>
            <person name="Isono K."/>
            <person name="Kuhara S."/>
            <person name="Ogasawara N."/>
            <person name="Kikuchi H."/>
        </authorList>
    </citation>
    <scope>NUCLEOTIDE SEQUENCE [LARGE SCALE GENOMIC DNA]</scope>
    <source>
        <strain>ATCC 42149 / RIB 40</strain>
    </source>
</reference>